<organism>
    <name type="scientific">Neisseria meningitidis serogroup A / serotype 4A (strain DSM 15465 / Z2491)</name>
    <dbReference type="NCBI Taxonomy" id="122587"/>
    <lineage>
        <taxon>Bacteria</taxon>
        <taxon>Pseudomonadati</taxon>
        <taxon>Pseudomonadota</taxon>
        <taxon>Betaproteobacteria</taxon>
        <taxon>Neisseriales</taxon>
        <taxon>Neisseriaceae</taxon>
        <taxon>Neisseria</taxon>
    </lineage>
</organism>
<sequence>MTNIRIGQGYDVHQLTEGRKLILGGVEIPFEKGLLGHSDADALLHAVTDALLGAAGLGDIGSHFPDTAAEFKDADSRVLLRAAYQSVQAQGWQAVNVDTTVIAQKPKLAPHIPQMRANIAADLGIDISCVNIKGKTNEKLGYLGRMEGIESQAAVLLVRI</sequence>
<keyword id="KW-0414">Isoprene biosynthesis</keyword>
<keyword id="KW-0456">Lyase</keyword>
<keyword id="KW-0479">Metal-binding</keyword>
<evidence type="ECO:0000255" key="1">
    <source>
        <dbReference type="HAMAP-Rule" id="MF_00107"/>
    </source>
</evidence>
<feature type="chain" id="PRO_0000189486" description="2-C-methyl-D-erythritol 2,4-cyclodiphosphate synthase">
    <location>
        <begin position="1"/>
        <end position="160"/>
    </location>
</feature>
<feature type="binding site" evidence="1">
    <location>
        <begin position="11"/>
        <end position="13"/>
    </location>
    <ligand>
        <name>4-CDP-2-C-methyl-D-erythritol 2-phosphate</name>
        <dbReference type="ChEBI" id="CHEBI:57919"/>
    </ligand>
</feature>
<feature type="binding site" evidence="1">
    <location>
        <position position="11"/>
    </location>
    <ligand>
        <name>a divalent metal cation</name>
        <dbReference type="ChEBI" id="CHEBI:60240"/>
    </ligand>
</feature>
<feature type="binding site" evidence="1">
    <location>
        <position position="13"/>
    </location>
    <ligand>
        <name>a divalent metal cation</name>
        <dbReference type="ChEBI" id="CHEBI:60240"/>
    </ligand>
</feature>
<feature type="binding site" evidence="1">
    <location>
        <begin position="37"/>
        <end position="38"/>
    </location>
    <ligand>
        <name>4-CDP-2-C-methyl-D-erythritol 2-phosphate</name>
        <dbReference type="ChEBI" id="CHEBI:57919"/>
    </ligand>
</feature>
<feature type="binding site" evidence="1">
    <location>
        <position position="45"/>
    </location>
    <ligand>
        <name>a divalent metal cation</name>
        <dbReference type="ChEBI" id="CHEBI:60240"/>
    </ligand>
</feature>
<feature type="binding site" evidence="1">
    <location>
        <begin position="59"/>
        <end position="61"/>
    </location>
    <ligand>
        <name>4-CDP-2-C-methyl-D-erythritol 2-phosphate</name>
        <dbReference type="ChEBI" id="CHEBI:57919"/>
    </ligand>
</feature>
<feature type="binding site" evidence="1">
    <location>
        <position position="145"/>
    </location>
    <ligand>
        <name>4-CDP-2-C-methyl-D-erythritol 2-phosphate</name>
        <dbReference type="ChEBI" id="CHEBI:57919"/>
    </ligand>
</feature>
<feature type="site" description="Transition state stabilizer" evidence="1">
    <location>
        <position position="37"/>
    </location>
</feature>
<feature type="site" description="Transition state stabilizer" evidence="1">
    <location>
        <position position="136"/>
    </location>
</feature>
<name>ISPF_NEIMA</name>
<comment type="function">
    <text evidence="1">Involved in the biosynthesis of isopentenyl diphosphate (IPP) and dimethylallyl diphosphate (DMAPP), two major building blocks of isoprenoid compounds. Catalyzes the conversion of 4-diphosphocytidyl-2-C-methyl-D-erythritol 2-phosphate (CDP-ME2P) to 2-C-methyl-D-erythritol 2,4-cyclodiphosphate (ME-CPP) with a corresponding release of cytidine 5-monophosphate (CMP).</text>
</comment>
<comment type="catalytic activity">
    <reaction evidence="1">
        <text>4-CDP-2-C-methyl-D-erythritol 2-phosphate = 2-C-methyl-D-erythritol 2,4-cyclic diphosphate + CMP</text>
        <dbReference type="Rhea" id="RHEA:23864"/>
        <dbReference type="ChEBI" id="CHEBI:57919"/>
        <dbReference type="ChEBI" id="CHEBI:58483"/>
        <dbReference type="ChEBI" id="CHEBI:60377"/>
        <dbReference type="EC" id="4.6.1.12"/>
    </reaction>
</comment>
<comment type="cofactor">
    <cofactor evidence="1">
        <name>a divalent metal cation</name>
        <dbReference type="ChEBI" id="CHEBI:60240"/>
    </cofactor>
    <text evidence="1">Binds 1 divalent metal cation per subunit.</text>
</comment>
<comment type="pathway">
    <text evidence="1">Isoprenoid biosynthesis; isopentenyl diphosphate biosynthesis via DXP pathway; isopentenyl diphosphate from 1-deoxy-D-xylulose 5-phosphate: step 4/6.</text>
</comment>
<comment type="subunit">
    <text evidence="1">Homotrimer.</text>
</comment>
<comment type="similarity">
    <text evidence="1">Belongs to the IspF family.</text>
</comment>
<dbReference type="EC" id="4.6.1.12" evidence="1"/>
<dbReference type="EMBL" id="AL157959">
    <property type="protein sequence ID" value="CAM08841.1"/>
    <property type="molecule type" value="Genomic_DNA"/>
</dbReference>
<dbReference type="PIR" id="C81867">
    <property type="entry name" value="C81867"/>
</dbReference>
<dbReference type="RefSeq" id="WP_002245122.1">
    <property type="nucleotide sequence ID" value="NC_003116.1"/>
</dbReference>
<dbReference type="SMR" id="Q9JTM4"/>
<dbReference type="EnsemblBacteria" id="CAM08841">
    <property type="protein sequence ID" value="CAM08841"/>
    <property type="gene ID" value="NMA1712"/>
</dbReference>
<dbReference type="GeneID" id="93387867"/>
<dbReference type="KEGG" id="nma:NMA1712"/>
<dbReference type="HOGENOM" id="CLU_084630_2_0_4"/>
<dbReference type="UniPathway" id="UPA00056">
    <property type="reaction ID" value="UER00095"/>
</dbReference>
<dbReference type="Proteomes" id="UP000000626">
    <property type="component" value="Chromosome"/>
</dbReference>
<dbReference type="GO" id="GO:0008685">
    <property type="term" value="F:2-C-methyl-D-erythritol 2,4-cyclodiphosphate synthase activity"/>
    <property type="evidence" value="ECO:0007669"/>
    <property type="project" value="UniProtKB-UniRule"/>
</dbReference>
<dbReference type="GO" id="GO:0046872">
    <property type="term" value="F:metal ion binding"/>
    <property type="evidence" value="ECO:0007669"/>
    <property type="project" value="UniProtKB-KW"/>
</dbReference>
<dbReference type="GO" id="GO:0019288">
    <property type="term" value="P:isopentenyl diphosphate biosynthetic process, methylerythritol 4-phosphate pathway"/>
    <property type="evidence" value="ECO:0007669"/>
    <property type="project" value="UniProtKB-UniRule"/>
</dbReference>
<dbReference type="GO" id="GO:0016114">
    <property type="term" value="P:terpenoid biosynthetic process"/>
    <property type="evidence" value="ECO:0007669"/>
    <property type="project" value="InterPro"/>
</dbReference>
<dbReference type="CDD" id="cd00554">
    <property type="entry name" value="MECDP_synthase"/>
    <property type="match status" value="1"/>
</dbReference>
<dbReference type="FunFam" id="3.30.1330.50:FF:000001">
    <property type="entry name" value="2-C-methyl-D-erythritol 2,4-cyclodiphosphate synthase"/>
    <property type="match status" value="1"/>
</dbReference>
<dbReference type="Gene3D" id="3.30.1330.50">
    <property type="entry name" value="2-C-methyl-D-erythritol 2,4-cyclodiphosphate synthase"/>
    <property type="match status" value="1"/>
</dbReference>
<dbReference type="HAMAP" id="MF_00107">
    <property type="entry name" value="IspF"/>
    <property type="match status" value="1"/>
</dbReference>
<dbReference type="InterPro" id="IPR003526">
    <property type="entry name" value="MECDP_synthase"/>
</dbReference>
<dbReference type="InterPro" id="IPR020555">
    <property type="entry name" value="MECDP_synthase_CS"/>
</dbReference>
<dbReference type="InterPro" id="IPR036571">
    <property type="entry name" value="MECDP_synthase_sf"/>
</dbReference>
<dbReference type="NCBIfam" id="TIGR00151">
    <property type="entry name" value="ispF"/>
    <property type="match status" value="1"/>
</dbReference>
<dbReference type="PANTHER" id="PTHR43181">
    <property type="entry name" value="2-C-METHYL-D-ERYTHRITOL 2,4-CYCLODIPHOSPHATE SYNTHASE, CHLOROPLASTIC"/>
    <property type="match status" value="1"/>
</dbReference>
<dbReference type="PANTHER" id="PTHR43181:SF1">
    <property type="entry name" value="2-C-METHYL-D-ERYTHRITOL 2,4-CYCLODIPHOSPHATE SYNTHASE, CHLOROPLASTIC"/>
    <property type="match status" value="1"/>
</dbReference>
<dbReference type="Pfam" id="PF02542">
    <property type="entry name" value="YgbB"/>
    <property type="match status" value="1"/>
</dbReference>
<dbReference type="SUPFAM" id="SSF69765">
    <property type="entry name" value="IpsF-like"/>
    <property type="match status" value="1"/>
</dbReference>
<dbReference type="PROSITE" id="PS01350">
    <property type="entry name" value="ISPF"/>
    <property type="match status" value="1"/>
</dbReference>
<gene>
    <name evidence="1" type="primary">ispF</name>
    <name type="ordered locus">NMA1712</name>
</gene>
<reference key="1">
    <citation type="journal article" date="2000" name="Nature">
        <title>Complete DNA sequence of a serogroup A strain of Neisseria meningitidis Z2491.</title>
        <authorList>
            <person name="Parkhill J."/>
            <person name="Achtman M."/>
            <person name="James K.D."/>
            <person name="Bentley S.D."/>
            <person name="Churcher C.M."/>
            <person name="Klee S.R."/>
            <person name="Morelli G."/>
            <person name="Basham D."/>
            <person name="Brown D."/>
            <person name="Chillingworth T."/>
            <person name="Davies R.M."/>
            <person name="Davis P."/>
            <person name="Devlin K."/>
            <person name="Feltwell T."/>
            <person name="Hamlin N."/>
            <person name="Holroyd S."/>
            <person name="Jagels K."/>
            <person name="Leather S."/>
            <person name="Moule S."/>
            <person name="Mungall K.L."/>
            <person name="Quail M.A."/>
            <person name="Rajandream M.A."/>
            <person name="Rutherford K.M."/>
            <person name="Simmonds M."/>
            <person name="Skelton J."/>
            <person name="Whitehead S."/>
            <person name="Spratt B.G."/>
            <person name="Barrell B.G."/>
        </authorList>
    </citation>
    <scope>NUCLEOTIDE SEQUENCE [LARGE SCALE GENOMIC DNA]</scope>
    <source>
        <strain>DSM 15465 / Z2491</strain>
    </source>
</reference>
<proteinExistence type="inferred from homology"/>
<protein>
    <recommendedName>
        <fullName evidence="1">2-C-methyl-D-erythritol 2,4-cyclodiphosphate synthase</fullName>
        <shortName evidence="1">MECDP-synthase</shortName>
        <shortName evidence="1">MECPP-synthase</shortName>
        <shortName evidence="1">MECPS</shortName>
        <ecNumber evidence="1">4.6.1.12</ecNumber>
    </recommendedName>
</protein>
<accession>Q9JTM4</accession>
<accession>A1ISS9</accession>